<feature type="chain" id="PRO_1000124129" description="Phosphoribosylformylglycinamidine synthase subunit PurQ">
    <location>
        <begin position="1"/>
        <end position="262"/>
    </location>
</feature>
<feature type="domain" description="Glutamine amidotransferase type-1" evidence="1">
    <location>
        <begin position="2"/>
        <end position="238"/>
    </location>
</feature>
<feature type="active site" description="Nucleophile" evidence="1">
    <location>
        <position position="87"/>
    </location>
</feature>
<feature type="active site" evidence="1">
    <location>
        <position position="223"/>
    </location>
</feature>
<feature type="active site" evidence="1">
    <location>
        <position position="225"/>
    </location>
</feature>
<evidence type="ECO:0000255" key="1">
    <source>
        <dbReference type="HAMAP-Rule" id="MF_00421"/>
    </source>
</evidence>
<gene>
    <name evidence="1" type="primary">purQ</name>
    <name type="ordered locus">Mthe_0098</name>
</gene>
<keyword id="KW-0067">ATP-binding</keyword>
<keyword id="KW-0963">Cytoplasm</keyword>
<keyword id="KW-0315">Glutamine amidotransferase</keyword>
<keyword id="KW-0378">Hydrolase</keyword>
<keyword id="KW-0436">Ligase</keyword>
<keyword id="KW-0547">Nucleotide-binding</keyword>
<keyword id="KW-0658">Purine biosynthesis</keyword>
<keyword id="KW-1185">Reference proteome</keyword>
<name>PURQ_METTP</name>
<proteinExistence type="inferred from homology"/>
<comment type="function">
    <text evidence="1">Part of the phosphoribosylformylglycinamidine synthase complex involved in the purines biosynthetic pathway. Catalyzes the ATP-dependent conversion of formylglycinamide ribonucleotide (FGAR) and glutamine to yield formylglycinamidine ribonucleotide (FGAM) and glutamate. The FGAM synthase complex is composed of three subunits. PurQ produces an ammonia molecule by converting glutamine to glutamate. PurL transfers the ammonia molecule to FGAR to form FGAM in an ATP-dependent manner. PurS interacts with PurQ and PurL and is thought to assist in the transfer of the ammonia molecule from PurQ to PurL.</text>
</comment>
<comment type="catalytic activity">
    <reaction evidence="1">
        <text>N(2)-formyl-N(1)-(5-phospho-beta-D-ribosyl)glycinamide + L-glutamine + ATP + H2O = 2-formamido-N(1)-(5-O-phospho-beta-D-ribosyl)acetamidine + L-glutamate + ADP + phosphate + H(+)</text>
        <dbReference type="Rhea" id="RHEA:17129"/>
        <dbReference type="ChEBI" id="CHEBI:15377"/>
        <dbReference type="ChEBI" id="CHEBI:15378"/>
        <dbReference type="ChEBI" id="CHEBI:29985"/>
        <dbReference type="ChEBI" id="CHEBI:30616"/>
        <dbReference type="ChEBI" id="CHEBI:43474"/>
        <dbReference type="ChEBI" id="CHEBI:58359"/>
        <dbReference type="ChEBI" id="CHEBI:147286"/>
        <dbReference type="ChEBI" id="CHEBI:147287"/>
        <dbReference type="ChEBI" id="CHEBI:456216"/>
        <dbReference type="EC" id="6.3.5.3"/>
    </reaction>
</comment>
<comment type="catalytic activity">
    <reaction evidence="1">
        <text>L-glutamine + H2O = L-glutamate + NH4(+)</text>
        <dbReference type="Rhea" id="RHEA:15889"/>
        <dbReference type="ChEBI" id="CHEBI:15377"/>
        <dbReference type="ChEBI" id="CHEBI:28938"/>
        <dbReference type="ChEBI" id="CHEBI:29985"/>
        <dbReference type="ChEBI" id="CHEBI:58359"/>
        <dbReference type="EC" id="3.5.1.2"/>
    </reaction>
</comment>
<comment type="pathway">
    <text evidence="1">Purine metabolism; IMP biosynthesis via de novo pathway; 5-amino-1-(5-phospho-D-ribosyl)imidazole from N(2)-formyl-N(1)-(5-phospho-D-ribosyl)glycinamide: step 1/2.</text>
</comment>
<comment type="subunit">
    <text evidence="1">Part of the FGAM synthase complex composed of 1 PurL, 1 PurQ and 2 PurS subunits.</text>
</comment>
<comment type="subcellular location">
    <subcellularLocation>
        <location evidence="1">Cytoplasm</location>
    </subcellularLocation>
</comment>
<sequence length="262" mass="29483">MRIAVIQFPGTNCEHETLVAVRECGMDGEIFRWNRPEQELCEFDGYVIPGGFSYQDRVRAGVIASKEPVMATLREEAANGKPIIGICNGFQILVESGILPFGDGVRLALAQNVMIRGGEIVRRGYYCAWTMLRHDAEEKRCSGSYILRRGEILSIPIAHAEGNLVASDRKVIERLIEDDQIVFRYCSPQGEIINEFPVNVNGSTENIAGISNPEGNVLGMMPHPERAFFAWQLPRKHPRIPGYGPGRKIFDSMKRYIEERRS</sequence>
<dbReference type="EC" id="6.3.5.3" evidence="1"/>
<dbReference type="EC" id="3.5.1.2" evidence="1"/>
<dbReference type="EMBL" id="CP000477">
    <property type="protein sequence ID" value="ABK13900.1"/>
    <property type="molecule type" value="Genomic_DNA"/>
</dbReference>
<dbReference type="SMR" id="A0B5C6"/>
<dbReference type="STRING" id="349307.Mthe_0098"/>
<dbReference type="KEGG" id="mtp:Mthe_0098"/>
<dbReference type="HOGENOM" id="CLU_001031_3_0_2"/>
<dbReference type="OrthoDB" id="6486at2157"/>
<dbReference type="UniPathway" id="UPA00074">
    <property type="reaction ID" value="UER00128"/>
</dbReference>
<dbReference type="Proteomes" id="UP000000674">
    <property type="component" value="Chromosome"/>
</dbReference>
<dbReference type="GO" id="GO:0005737">
    <property type="term" value="C:cytoplasm"/>
    <property type="evidence" value="ECO:0007669"/>
    <property type="project" value="UniProtKB-SubCell"/>
</dbReference>
<dbReference type="GO" id="GO:0005524">
    <property type="term" value="F:ATP binding"/>
    <property type="evidence" value="ECO:0007669"/>
    <property type="project" value="UniProtKB-KW"/>
</dbReference>
<dbReference type="GO" id="GO:0004359">
    <property type="term" value="F:glutaminase activity"/>
    <property type="evidence" value="ECO:0007669"/>
    <property type="project" value="UniProtKB-EC"/>
</dbReference>
<dbReference type="GO" id="GO:0004642">
    <property type="term" value="F:phosphoribosylformylglycinamidine synthase activity"/>
    <property type="evidence" value="ECO:0007669"/>
    <property type="project" value="UniProtKB-UniRule"/>
</dbReference>
<dbReference type="GO" id="GO:0006189">
    <property type="term" value="P:'de novo' IMP biosynthetic process"/>
    <property type="evidence" value="ECO:0007669"/>
    <property type="project" value="UniProtKB-UniRule"/>
</dbReference>
<dbReference type="Gene3D" id="3.40.50.880">
    <property type="match status" value="1"/>
</dbReference>
<dbReference type="HAMAP" id="MF_00421">
    <property type="entry name" value="PurQ"/>
    <property type="match status" value="1"/>
</dbReference>
<dbReference type="InterPro" id="IPR029062">
    <property type="entry name" value="Class_I_gatase-like"/>
</dbReference>
<dbReference type="InterPro" id="IPR010075">
    <property type="entry name" value="PRibForGlyAmidine_synth_PurQ"/>
</dbReference>
<dbReference type="NCBIfam" id="TIGR01737">
    <property type="entry name" value="FGAM_synth_I"/>
    <property type="match status" value="1"/>
</dbReference>
<dbReference type="PANTHER" id="PTHR47552">
    <property type="entry name" value="PHOSPHORIBOSYLFORMYLGLYCINAMIDINE SYNTHASE SUBUNIT PURQ"/>
    <property type="match status" value="1"/>
</dbReference>
<dbReference type="PANTHER" id="PTHR47552:SF1">
    <property type="entry name" value="PHOSPHORIBOSYLFORMYLGLYCINAMIDINE SYNTHASE SUBUNIT PURQ"/>
    <property type="match status" value="1"/>
</dbReference>
<dbReference type="Pfam" id="PF13507">
    <property type="entry name" value="GATase_5"/>
    <property type="match status" value="1"/>
</dbReference>
<dbReference type="PIRSF" id="PIRSF001586">
    <property type="entry name" value="FGAM_synth_I"/>
    <property type="match status" value="1"/>
</dbReference>
<dbReference type="SMART" id="SM01211">
    <property type="entry name" value="GATase_5"/>
    <property type="match status" value="1"/>
</dbReference>
<dbReference type="SUPFAM" id="SSF52317">
    <property type="entry name" value="Class I glutamine amidotransferase-like"/>
    <property type="match status" value="1"/>
</dbReference>
<dbReference type="PROSITE" id="PS51273">
    <property type="entry name" value="GATASE_TYPE_1"/>
    <property type="match status" value="1"/>
</dbReference>
<reference key="1">
    <citation type="submission" date="2006-10" db="EMBL/GenBank/DDBJ databases">
        <title>Complete sequence of Methanosaeta thermophila PT.</title>
        <authorList>
            <consortium name="US DOE Joint Genome Institute"/>
            <person name="Copeland A."/>
            <person name="Lucas S."/>
            <person name="Lapidus A."/>
            <person name="Barry K."/>
            <person name="Detter J.C."/>
            <person name="Glavina del Rio T."/>
            <person name="Hammon N."/>
            <person name="Israni S."/>
            <person name="Pitluck S."/>
            <person name="Chain P."/>
            <person name="Malfatti S."/>
            <person name="Shin M."/>
            <person name="Vergez L."/>
            <person name="Schmutz J."/>
            <person name="Larimer F."/>
            <person name="Land M."/>
            <person name="Hauser L."/>
            <person name="Kyrpides N."/>
            <person name="Kim E."/>
            <person name="Smith K.S."/>
            <person name="Ingram-Smith C."/>
            <person name="Richardson P."/>
        </authorList>
    </citation>
    <scope>NUCLEOTIDE SEQUENCE [LARGE SCALE GENOMIC DNA]</scope>
    <source>
        <strain>DSM 6194 / JCM 14653 / NBRC 101360 / PT</strain>
    </source>
</reference>
<organism>
    <name type="scientific">Methanothrix thermoacetophila (strain DSM 6194 / JCM 14653 / NBRC 101360 / PT)</name>
    <name type="common">Methanosaeta thermophila</name>
    <dbReference type="NCBI Taxonomy" id="349307"/>
    <lineage>
        <taxon>Archaea</taxon>
        <taxon>Methanobacteriati</taxon>
        <taxon>Methanobacteriota</taxon>
        <taxon>Stenosarchaea group</taxon>
        <taxon>Methanomicrobia</taxon>
        <taxon>Methanotrichales</taxon>
        <taxon>Methanotrichaceae</taxon>
        <taxon>Methanothrix</taxon>
    </lineage>
</organism>
<protein>
    <recommendedName>
        <fullName evidence="1">Phosphoribosylformylglycinamidine synthase subunit PurQ</fullName>
        <shortName evidence="1">FGAM synthase</shortName>
        <ecNumber evidence="1">6.3.5.3</ecNumber>
    </recommendedName>
    <alternativeName>
        <fullName evidence="1">Formylglycinamide ribonucleotide amidotransferase subunit I</fullName>
        <shortName evidence="1">FGAR amidotransferase I</shortName>
        <shortName evidence="1">FGAR-AT I</shortName>
    </alternativeName>
    <alternativeName>
        <fullName evidence="1">Glutaminase PurQ</fullName>
        <ecNumber evidence="1">3.5.1.2</ecNumber>
    </alternativeName>
    <alternativeName>
        <fullName evidence="1">Phosphoribosylformylglycinamidine synthase subunit I</fullName>
    </alternativeName>
</protein>
<accession>A0B5C6</accession>